<accession>Q6MTB6</accession>
<keyword id="KW-0067">ATP-binding</keyword>
<keyword id="KW-0963">Cytoplasm</keyword>
<keyword id="KW-0460">Magnesium</keyword>
<keyword id="KW-0479">Metal-binding</keyword>
<keyword id="KW-0547">Nucleotide-binding</keyword>
<keyword id="KW-0554">One-carbon metabolism</keyword>
<keyword id="KW-0630">Potassium</keyword>
<keyword id="KW-1185">Reference proteome</keyword>
<keyword id="KW-0808">Transferase</keyword>
<gene>
    <name evidence="1" type="primary">metK</name>
    <name type="ordered locus">MSC_0492</name>
</gene>
<sequence>MNQNIEKRLFTSESVSEGHPDKICDQISDAILDEVLKQDKNAKVACEVFATTNYLLIGGQISSTAIVNYEQVARDVLKKNGYVDDAYGINANTCKIDIKIESQSPDIAQGVELSNDQIGAGDQGIMFGYATNESKTYLPLAITIAHELVYNATSQRKKGLFKWARPDMKSQVTIDYTNINNPKIDTILMSIQHDPNYNETEFKKYIKENIMNLVAKEFNLNTDFKVLINPTGRFVIGGPQGDTGLTGRKIIADTYGGYSRHGGGAFSGKDSTKVDRSAAYMCRYVAKNLVAAGLADKIEIQVSYAIGISQPISIFIETFNTHKVDLNTIYKAVYENFDFSVSSMIKTLDLKKPIFFKTSKYGHFGKKDLPWEKLDKIEVLKEYKKCS</sequence>
<proteinExistence type="inferred from homology"/>
<comment type="function">
    <text evidence="1">Catalyzes the formation of S-adenosylmethionine (AdoMet) from methionine and ATP. The overall synthetic reaction is composed of two sequential steps, AdoMet formation and the subsequent tripolyphosphate hydrolysis which occurs prior to release of AdoMet from the enzyme.</text>
</comment>
<comment type="catalytic activity">
    <reaction evidence="1">
        <text>L-methionine + ATP + H2O = S-adenosyl-L-methionine + phosphate + diphosphate</text>
        <dbReference type="Rhea" id="RHEA:21080"/>
        <dbReference type="ChEBI" id="CHEBI:15377"/>
        <dbReference type="ChEBI" id="CHEBI:30616"/>
        <dbReference type="ChEBI" id="CHEBI:33019"/>
        <dbReference type="ChEBI" id="CHEBI:43474"/>
        <dbReference type="ChEBI" id="CHEBI:57844"/>
        <dbReference type="ChEBI" id="CHEBI:59789"/>
        <dbReference type="EC" id="2.5.1.6"/>
    </reaction>
</comment>
<comment type="cofactor">
    <cofactor evidence="1">
        <name>Mg(2+)</name>
        <dbReference type="ChEBI" id="CHEBI:18420"/>
    </cofactor>
    <text evidence="1">Binds 2 divalent ions per subunit.</text>
</comment>
<comment type="cofactor">
    <cofactor evidence="1">
        <name>K(+)</name>
        <dbReference type="ChEBI" id="CHEBI:29103"/>
    </cofactor>
    <text evidence="1">Binds 1 potassium ion per subunit.</text>
</comment>
<comment type="pathway">
    <text evidence="1">Amino-acid biosynthesis; S-adenosyl-L-methionine biosynthesis; S-adenosyl-L-methionine from L-methionine: step 1/1.</text>
</comment>
<comment type="subunit">
    <text evidence="1">Homotetramer; dimer of dimers.</text>
</comment>
<comment type="subcellular location">
    <subcellularLocation>
        <location evidence="1">Cytoplasm</location>
    </subcellularLocation>
</comment>
<comment type="similarity">
    <text evidence="1">Belongs to the AdoMet synthase family.</text>
</comment>
<dbReference type="EC" id="2.5.1.6" evidence="1"/>
<dbReference type="EMBL" id="BX293980">
    <property type="protein sequence ID" value="CAE77120.1"/>
    <property type="molecule type" value="Genomic_DNA"/>
</dbReference>
<dbReference type="RefSeq" id="NP_975478.1">
    <property type="nucleotide sequence ID" value="NC_005364.2"/>
</dbReference>
<dbReference type="RefSeq" id="WP_011166676.1">
    <property type="nucleotide sequence ID" value="NC_005364.2"/>
</dbReference>
<dbReference type="SMR" id="Q6MTB6"/>
<dbReference type="STRING" id="272632.MSC_0492"/>
<dbReference type="KEGG" id="mmy:MSC_0492"/>
<dbReference type="PATRIC" id="fig|272632.4.peg.532"/>
<dbReference type="eggNOG" id="COG0192">
    <property type="taxonomic scope" value="Bacteria"/>
</dbReference>
<dbReference type="HOGENOM" id="CLU_041802_1_1_14"/>
<dbReference type="UniPathway" id="UPA00315">
    <property type="reaction ID" value="UER00080"/>
</dbReference>
<dbReference type="Proteomes" id="UP000001016">
    <property type="component" value="Chromosome"/>
</dbReference>
<dbReference type="GO" id="GO:0005737">
    <property type="term" value="C:cytoplasm"/>
    <property type="evidence" value="ECO:0007669"/>
    <property type="project" value="UniProtKB-SubCell"/>
</dbReference>
<dbReference type="GO" id="GO:0005524">
    <property type="term" value="F:ATP binding"/>
    <property type="evidence" value="ECO:0007669"/>
    <property type="project" value="UniProtKB-UniRule"/>
</dbReference>
<dbReference type="GO" id="GO:0000287">
    <property type="term" value="F:magnesium ion binding"/>
    <property type="evidence" value="ECO:0007669"/>
    <property type="project" value="UniProtKB-UniRule"/>
</dbReference>
<dbReference type="GO" id="GO:0004478">
    <property type="term" value="F:methionine adenosyltransferase activity"/>
    <property type="evidence" value="ECO:0007669"/>
    <property type="project" value="UniProtKB-UniRule"/>
</dbReference>
<dbReference type="GO" id="GO:0006730">
    <property type="term" value="P:one-carbon metabolic process"/>
    <property type="evidence" value="ECO:0007669"/>
    <property type="project" value="UniProtKB-KW"/>
</dbReference>
<dbReference type="GO" id="GO:0006556">
    <property type="term" value="P:S-adenosylmethionine biosynthetic process"/>
    <property type="evidence" value="ECO:0007669"/>
    <property type="project" value="UniProtKB-UniRule"/>
</dbReference>
<dbReference type="CDD" id="cd18079">
    <property type="entry name" value="S-AdoMet_synt"/>
    <property type="match status" value="1"/>
</dbReference>
<dbReference type="FunFam" id="3.30.300.10:FF:000003">
    <property type="entry name" value="S-adenosylmethionine synthase"/>
    <property type="match status" value="1"/>
</dbReference>
<dbReference type="Gene3D" id="3.30.300.10">
    <property type="match status" value="3"/>
</dbReference>
<dbReference type="HAMAP" id="MF_00086">
    <property type="entry name" value="S_AdoMet_synth1"/>
    <property type="match status" value="1"/>
</dbReference>
<dbReference type="InterPro" id="IPR022631">
    <property type="entry name" value="ADOMET_SYNTHASE_CS"/>
</dbReference>
<dbReference type="InterPro" id="IPR022630">
    <property type="entry name" value="S-AdoMet_synt_C"/>
</dbReference>
<dbReference type="InterPro" id="IPR022629">
    <property type="entry name" value="S-AdoMet_synt_central"/>
</dbReference>
<dbReference type="InterPro" id="IPR022628">
    <property type="entry name" value="S-AdoMet_synt_N"/>
</dbReference>
<dbReference type="InterPro" id="IPR002133">
    <property type="entry name" value="S-AdoMet_synthetase"/>
</dbReference>
<dbReference type="InterPro" id="IPR022636">
    <property type="entry name" value="S-AdoMet_synthetase_sfam"/>
</dbReference>
<dbReference type="NCBIfam" id="TIGR01034">
    <property type="entry name" value="metK"/>
    <property type="match status" value="1"/>
</dbReference>
<dbReference type="PANTHER" id="PTHR11964">
    <property type="entry name" value="S-ADENOSYLMETHIONINE SYNTHETASE"/>
    <property type="match status" value="1"/>
</dbReference>
<dbReference type="Pfam" id="PF02773">
    <property type="entry name" value="S-AdoMet_synt_C"/>
    <property type="match status" value="1"/>
</dbReference>
<dbReference type="Pfam" id="PF02772">
    <property type="entry name" value="S-AdoMet_synt_M"/>
    <property type="match status" value="1"/>
</dbReference>
<dbReference type="Pfam" id="PF00438">
    <property type="entry name" value="S-AdoMet_synt_N"/>
    <property type="match status" value="1"/>
</dbReference>
<dbReference type="PIRSF" id="PIRSF000497">
    <property type="entry name" value="MAT"/>
    <property type="match status" value="1"/>
</dbReference>
<dbReference type="SUPFAM" id="SSF55973">
    <property type="entry name" value="S-adenosylmethionine synthetase"/>
    <property type="match status" value="3"/>
</dbReference>
<dbReference type="PROSITE" id="PS00376">
    <property type="entry name" value="ADOMET_SYNTHASE_1"/>
    <property type="match status" value="1"/>
</dbReference>
<dbReference type="PROSITE" id="PS00377">
    <property type="entry name" value="ADOMET_SYNTHASE_2"/>
    <property type="match status" value="1"/>
</dbReference>
<name>METK_MYCMS</name>
<organism>
    <name type="scientific">Mycoplasma mycoides subsp. mycoides SC (strain CCUG 32753 / NCTC 10114 / PG1)</name>
    <dbReference type="NCBI Taxonomy" id="272632"/>
    <lineage>
        <taxon>Bacteria</taxon>
        <taxon>Bacillati</taxon>
        <taxon>Mycoplasmatota</taxon>
        <taxon>Mollicutes</taxon>
        <taxon>Mycoplasmataceae</taxon>
        <taxon>Mycoplasma</taxon>
    </lineage>
</organism>
<protein>
    <recommendedName>
        <fullName evidence="1">S-adenosylmethionine synthase</fullName>
        <shortName evidence="1">AdoMet synthase</shortName>
        <ecNumber evidence="1">2.5.1.6</ecNumber>
    </recommendedName>
    <alternativeName>
        <fullName evidence="1">MAT</fullName>
    </alternativeName>
    <alternativeName>
        <fullName evidence="1">Methionine adenosyltransferase</fullName>
    </alternativeName>
</protein>
<reference key="1">
    <citation type="journal article" date="2004" name="Genome Res.">
        <title>The genome sequence of Mycoplasma mycoides subsp. mycoides SC type strain PG1T, the causative agent of contagious bovine pleuropneumonia (CBPP).</title>
        <authorList>
            <person name="Westberg J."/>
            <person name="Persson A."/>
            <person name="Holmberg A."/>
            <person name="Goesmann A."/>
            <person name="Lundeberg J."/>
            <person name="Johansson K.-E."/>
            <person name="Pettersson B."/>
            <person name="Uhlen M."/>
        </authorList>
    </citation>
    <scope>NUCLEOTIDE SEQUENCE [LARGE SCALE GENOMIC DNA]</scope>
    <source>
        <strain>CCUG 32753 / NCTC 10114 / PG1</strain>
    </source>
</reference>
<evidence type="ECO:0000255" key="1">
    <source>
        <dbReference type="HAMAP-Rule" id="MF_00086"/>
    </source>
</evidence>
<feature type="chain" id="PRO_0000174551" description="S-adenosylmethionine synthase">
    <location>
        <begin position="1"/>
        <end position="387"/>
    </location>
</feature>
<feature type="region of interest" description="Flexible loop" evidence="1">
    <location>
        <begin position="103"/>
        <end position="113"/>
    </location>
</feature>
<feature type="binding site" description="in other chain" evidence="1">
    <location>
        <position position="19"/>
    </location>
    <ligand>
        <name>ATP</name>
        <dbReference type="ChEBI" id="CHEBI:30616"/>
        <note>ligand shared between two neighboring subunits</note>
    </ligand>
</feature>
<feature type="binding site" evidence="1">
    <location>
        <position position="21"/>
    </location>
    <ligand>
        <name>Mg(2+)</name>
        <dbReference type="ChEBI" id="CHEBI:18420"/>
    </ligand>
</feature>
<feature type="binding site" evidence="1">
    <location>
        <position position="47"/>
    </location>
    <ligand>
        <name>K(+)</name>
        <dbReference type="ChEBI" id="CHEBI:29103"/>
    </ligand>
</feature>
<feature type="binding site" description="in other chain" evidence="1">
    <location>
        <position position="103"/>
    </location>
    <ligand>
        <name>L-methionine</name>
        <dbReference type="ChEBI" id="CHEBI:57844"/>
        <note>ligand shared between two neighboring subunits</note>
    </ligand>
</feature>
<feature type="binding site" description="in other chain" evidence="1">
    <location>
        <begin position="167"/>
        <end position="169"/>
    </location>
    <ligand>
        <name>ATP</name>
        <dbReference type="ChEBI" id="CHEBI:30616"/>
        <note>ligand shared between two neighboring subunits</note>
    </ligand>
</feature>
<feature type="binding site" description="in other chain" evidence="1">
    <location>
        <begin position="233"/>
        <end position="234"/>
    </location>
    <ligand>
        <name>ATP</name>
        <dbReference type="ChEBI" id="CHEBI:30616"/>
        <note>ligand shared between two neighboring subunits</note>
    </ligand>
</feature>
<feature type="binding site" evidence="1">
    <location>
        <position position="242"/>
    </location>
    <ligand>
        <name>ATP</name>
        <dbReference type="ChEBI" id="CHEBI:30616"/>
        <note>ligand shared between two neighboring subunits</note>
    </ligand>
</feature>
<feature type="binding site" evidence="1">
    <location>
        <position position="242"/>
    </location>
    <ligand>
        <name>L-methionine</name>
        <dbReference type="ChEBI" id="CHEBI:57844"/>
        <note>ligand shared between two neighboring subunits</note>
    </ligand>
</feature>
<feature type="binding site" description="in other chain" evidence="1">
    <location>
        <begin position="248"/>
        <end position="249"/>
    </location>
    <ligand>
        <name>ATP</name>
        <dbReference type="ChEBI" id="CHEBI:30616"/>
        <note>ligand shared between two neighboring subunits</note>
    </ligand>
</feature>
<feature type="binding site" evidence="1">
    <location>
        <position position="265"/>
    </location>
    <ligand>
        <name>ATP</name>
        <dbReference type="ChEBI" id="CHEBI:30616"/>
        <note>ligand shared between two neighboring subunits</note>
    </ligand>
</feature>
<feature type="binding site" evidence="1">
    <location>
        <position position="269"/>
    </location>
    <ligand>
        <name>ATP</name>
        <dbReference type="ChEBI" id="CHEBI:30616"/>
        <note>ligand shared between two neighboring subunits</note>
    </ligand>
</feature>
<feature type="binding site" description="in other chain" evidence="1">
    <location>
        <position position="273"/>
    </location>
    <ligand>
        <name>L-methionine</name>
        <dbReference type="ChEBI" id="CHEBI:57844"/>
        <note>ligand shared between two neighboring subunits</note>
    </ligand>
</feature>